<sequence length="272" mass="29060">MSDHPGPGAVTPELFGVGGDWLAVTAGESGASVFRAADATRYAKCVPAADAAGLEAERDRIAWLSGQGVPGPRVLDWYAGDAGACLVTRAVPGVPADRVGADDLRTAWGAVADAVRRLHEVPVASCPFRRGLDSVVDAARDVVARGAVHPEFLPVEQRLVPPAELLARLTGELARRRDQEAADTVVCHGDLCLPNIVLHPETLEVSGFIDLGRLGAADRHADLALLLANARETWVDEERARFADAAFAERYGIAPDPERLRFYLHLDPLTWG</sequence>
<feature type="chain" id="PRO_0000204801" description="Streptomycin 3''-kinase">
    <location>
        <begin position="1"/>
        <end position="272"/>
    </location>
</feature>
<feature type="active site" description="Proton acceptor" evidence="1">
    <location>
        <position position="190"/>
    </location>
</feature>
<feature type="sequence conflict" description="In Ref. 2; AAA26700." evidence="2" ref="2">
    <original>A</original>
    <variation>P</variation>
    <location>
        <position position="51"/>
    </location>
</feature>
<feature type="sequence conflict" description="In Ref. 2; AAA26700." evidence="2" ref="2">
    <original>V</original>
    <variation>A</variation>
    <location>
        <position position="160"/>
    </location>
</feature>
<accession>P18150</accession>
<reference key="1">
    <citation type="journal article" date="1990" name="Nucleic Acids Res.">
        <title>PCR cloning of a streptomycin phosphotransferase (aphE) gene from Streptomyces griseus ATCC 12475.</title>
        <authorList>
            <person name="Trower M.K."/>
            <person name="Clark K.G."/>
        </authorList>
    </citation>
    <scope>NUCLEOTIDE SEQUENCE [GENOMIC DNA]</scope>
    <source>
        <strain>ATCC 12475 / U-76</strain>
    </source>
</reference>
<reference key="2">
    <citation type="journal article" date="1988" name="Arch. Microbiol.">
        <title>A second streptomycin resistance gene from Streptomyces griseus codes for streptomycin-3''-phosphotransferase. Relationships between antibiotic and protein kinases.</title>
        <authorList>
            <person name="Heinzel P."/>
            <person name="Werbitzky O."/>
            <person name="Distler J."/>
            <person name="Piepersberg W."/>
        </authorList>
    </citation>
    <scope>NUCLEOTIDE SEQUENCE [GENOMIC DNA]</scope>
    <source>
        <strain>N2-3-11</strain>
    </source>
</reference>
<reference key="3">
    <citation type="journal article" date="1987" name="J. Gen. Microbiol.">
        <title>The nucleotide sequence of a streptomycin streptomycin phosphotransferase (streptomycin kinase) gene from a streptomycin producer.</title>
        <authorList>
            <person name="Shinkawa H."/>
            <person name="Sugiyama M."/>
            <person name="Nimi O."/>
        </authorList>
    </citation>
    <scope>NUCLEOTIDE SEQUENCE [GENOMIC DNA]</scope>
</reference>
<reference key="4">
    <citation type="journal article" date="1988" name="J. Gen. Microbiol.">
        <authorList>
            <person name="Shinkawa H."/>
            <person name="Sugiyama M."/>
            <person name="Nimi O."/>
        </authorList>
    </citation>
    <scope>ERRATUM OF PUBMED:2821169</scope>
</reference>
<evidence type="ECO:0000250" key="1"/>
<evidence type="ECO:0000305" key="2"/>
<organism>
    <name type="scientific">Streptomyces griseus</name>
    <dbReference type="NCBI Taxonomy" id="1911"/>
    <lineage>
        <taxon>Bacteria</taxon>
        <taxon>Bacillati</taxon>
        <taxon>Actinomycetota</taxon>
        <taxon>Actinomycetes</taxon>
        <taxon>Kitasatosporales</taxon>
        <taxon>Streptomycetaceae</taxon>
        <taxon>Streptomyces</taxon>
    </lineage>
</organism>
<proteinExistence type="inferred from homology"/>
<keyword id="KW-0046">Antibiotic resistance</keyword>
<keyword id="KW-0067">ATP-binding</keyword>
<keyword id="KW-0418">Kinase</keyword>
<keyword id="KW-0547">Nucleotide-binding</keyword>
<keyword id="KW-0808">Transferase</keyword>
<comment type="function">
    <text>The aminoglycoside phosphotransferases achieve inactivation of their antibiotic substrates by phosphorylation.</text>
</comment>
<comment type="catalytic activity">
    <reaction>
        <text>streptomycin + ATP = streptomycin 3''-phosphate + ADP + H(+)</text>
        <dbReference type="Rhea" id="RHEA:18377"/>
        <dbReference type="ChEBI" id="CHEBI:15378"/>
        <dbReference type="ChEBI" id="CHEBI:30616"/>
        <dbReference type="ChEBI" id="CHEBI:57482"/>
        <dbReference type="ChEBI" id="CHEBI:58007"/>
        <dbReference type="ChEBI" id="CHEBI:456216"/>
        <dbReference type="EC" id="2.7.1.87"/>
    </reaction>
</comment>
<comment type="similarity">
    <text evidence="2">Belongs to the aminoglycoside phosphotransferase family.</text>
</comment>
<dbReference type="EC" id="2.7.1.87"/>
<dbReference type="EMBL" id="X53527">
    <property type="protein sequence ID" value="CAA37605.1"/>
    <property type="molecule type" value="Genomic_DNA"/>
</dbReference>
<dbReference type="EMBL" id="M37378">
    <property type="protein sequence ID" value="AAA26700.1"/>
    <property type="molecule type" value="Genomic_DNA"/>
</dbReference>
<dbReference type="EMBL" id="M16482">
    <property type="protein sequence ID" value="AAA26815.1"/>
    <property type="molecule type" value="Genomic_DNA"/>
</dbReference>
<dbReference type="PIR" id="A46563">
    <property type="entry name" value="A46563"/>
</dbReference>
<dbReference type="PIR" id="JL0031">
    <property type="entry name" value="JL0031"/>
</dbReference>
<dbReference type="RefSeq" id="WP_063840676.1">
    <property type="nucleotide sequence ID" value="NG_047409.1"/>
</dbReference>
<dbReference type="SMR" id="P18150"/>
<dbReference type="CARD" id="ARO:3002638">
    <property type="molecule name" value="APH(3'')-Ia"/>
    <property type="mechanism identifier" value="ARO:0001004"/>
    <property type="mechanism name" value="antibiotic inactivation"/>
</dbReference>
<dbReference type="KEGG" id="ag:AAA26815"/>
<dbReference type="GO" id="GO:0005524">
    <property type="term" value="F:ATP binding"/>
    <property type="evidence" value="ECO:0007669"/>
    <property type="project" value="UniProtKB-KW"/>
</dbReference>
<dbReference type="GO" id="GO:0050299">
    <property type="term" value="F:streptomycin 3''-kinase activity"/>
    <property type="evidence" value="ECO:0007669"/>
    <property type="project" value="UniProtKB-EC"/>
</dbReference>
<dbReference type="GO" id="GO:0046677">
    <property type="term" value="P:response to antibiotic"/>
    <property type="evidence" value="ECO:0007669"/>
    <property type="project" value="UniProtKB-KW"/>
</dbReference>
<dbReference type="CDD" id="cd05150">
    <property type="entry name" value="APH"/>
    <property type="match status" value="1"/>
</dbReference>
<dbReference type="Gene3D" id="3.90.1200.10">
    <property type="match status" value="1"/>
</dbReference>
<dbReference type="Gene3D" id="3.30.200.20">
    <property type="entry name" value="Phosphorylase Kinase, domain 1"/>
    <property type="match status" value="1"/>
</dbReference>
<dbReference type="InterPro" id="IPR051678">
    <property type="entry name" value="AGP_Transferase"/>
</dbReference>
<dbReference type="InterPro" id="IPR002575">
    <property type="entry name" value="Aminoglycoside_PTrfase"/>
</dbReference>
<dbReference type="InterPro" id="IPR024165">
    <property type="entry name" value="Kan/Strep_kinase"/>
</dbReference>
<dbReference type="InterPro" id="IPR011009">
    <property type="entry name" value="Kinase-like_dom_sf"/>
</dbReference>
<dbReference type="NCBIfam" id="NF032896">
    <property type="entry name" value="APH_3pp"/>
    <property type="match status" value="1"/>
</dbReference>
<dbReference type="NCBIfam" id="NF032894">
    <property type="entry name" value="APH_3pp_Ia"/>
    <property type="match status" value="1"/>
</dbReference>
<dbReference type="PANTHER" id="PTHR21310:SF41">
    <property type="entry name" value="3'-PHOSPHOTRANSFERASE, PUTATIVE-RELATED"/>
    <property type="match status" value="1"/>
</dbReference>
<dbReference type="PANTHER" id="PTHR21310">
    <property type="entry name" value="AMINOGLYCOSIDE PHOSPHOTRANSFERASE-RELATED-RELATED"/>
    <property type="match status" value="1"/>
</dbReference>
<dbReference type="Pfam" id="PF01636">
    <property type="entry name" value="APH"/>
    <property type="match status" value="1"/>
</dbReference>
<dbReference type="PIRSF" id="PIRSF000706">
    <property type="entry name" value="Kanamycin_kin"/>
    <property type="match status" value="1"/>
</dbReference>
<dbReference type="SUPFAM" id="SSF56112">
    <property type="entry name" value="Protein kinase-like (PK-like)"/>
    <property type="match status" value="1"/>
</dbReference>
<gene>
    <name type="primary">aphE</name>
</gene>
<protein>
    <recommendedName>
        <fullName>Streptomycin 3''-kinase</fullName>
        <ecNumber>2.7.1.87</ecNumber>
    </recommendedName>
    <alternativeName>
        <fullName>Streptomycin 3''-phosphotransferase</fullName>
    </alternativeName>
    <alternativeName>
        <fullName>Streptomycin 6-kinase</fullName>
    </alternativeName>
    <alternativeName>
        <fullName>Streptomycin 6-phosphotransferase</fullName>
    </alternativeName>
</protein>
<name>APHE_STRGR</name>